<feature type="chain" id="PRO_1000129824" description="Phosphoenolpyruvate carboxylase">
    <location>
        <begin position="1"/>
        <end position="876"/>
    </location>
</feature>
<feature type="active site" evidence="1">
    <location>
        <position position="138"/>
    </location>
</feature>
<feature type="active site" evidence="1">
    <location>
        <position position="543"/>
    </location>
</feature>
<sequence length="876" mass="99129">MNEKYAALKSNVSMLGHLLGNTIRDAHGEELLAKVETIRKLSKTARAGSDNDRNALIEEIKSLPNDQLTPVARAFSQFLNLTNMAEQYHTISRHCEEHVCEPDAISSLFSKLSQNNISKLDTVQAVRELNIELVLTAHPTEIARRTMINKLVKINECLSKLELSDISFSEREKTERRLEQLIAQAWHSDVIRQERPTPLDEAKWGFAVVENSLWQGIPDFLREFDQRLENHLGEGLPIDARPVHMSSWMGGDRDGNPFVTHTITREVMLLSRWKAADLYLKDVNELISELSMVKCTDEVRKLAGDQHEPYRAILKQLRTLLNDTLENLDAQMKGELTNNKPILRNAEQLWLPLHACYQSLHACGMGIIAEGSLLDTLRRVKAFGAHLVRLDIRQESTRHSNVLSELTRYLGIGDYDQWSEQDKISFLVNELSSKRPLLPRDWTPTAEVQEVIDTCKIVAEQSKEALGSYVISMARTASDVLAVHLLLQEAGCPFRMDVCPLFETLDDLNRSKEVMEQLFSIDWYRGFIQNHQMVMIGYSDSAKDAGVMSAGWAQYSAMEALVDVCEKESIELTLFHGRGGTIGRGGAPAHAALLSQPPKSLKGGLRVTEQGEMIRFKLGLPEVAVNSFNLYASAILEANLLPPPEPKQEWRDLMEVLSEVSCEAYRNIVRGEKDFVPYFRAATPELELGKLPLGSRPAKRNPNGGVESLRAIPWIFSWSQNRLVLPAWLGAGEAIQYSIDKGHQELLEEMCREWPFFSTRLGMLEMVYTKCNPQMSEYYDQRLTDKSLWPLGVRLRNQLQADIKAVLNVENSDHLMESDPWGSESIRLRNIYVDPLNMLQAELLYRTRQQEETSPELEEALMVTIAGIAAGMRNTG</sequence>
<reference key="1">
    <citation type="journal article" date="2008" name="BMC Genomics">
        <title>The genome sequence of the fish pathogen Aliivibrio salmonicida strain LFI1238 shows extensive evidence of gene decay.</title>
        <authorList>
            <person name="Hjerde E."/>
            <person name="Lorentzen M.S."/>
            <person name="Holden M.T."/>
            <person name="Seeger K."/>
            <person name="Paulsen S."/>
            <person name="Bason N."/>
            <person name="Churcher C."/>
            <person name="Harris D."/>
            <person name="Norbertczak H."/>
            <person name="Quail M.A."/>
            <person name="Sanders S."/>
            <person name="Thurston S."/>
            <person name="Parkhill J."/>
            <person name="Willassen N.P."/>
            <person name="Thomson N.R."/>
        </authorList>
    </citation>
    <scope>NUCLEOTIDE SEQUENCE [LARGE SCALE GENOMIC DNA]</scope>
    <source>
        <strain>LFI1238</strain>
    </source>
</reference>
<evidence type="ECO:0000255" key="1">
    <source>
        <dbReference type="HAMAP-Rule" id="MF_00595"/>
    </source>
</evidence>
<accession>B6EMN4</accession>
<protein>
    <recommendedName>
        <fullName evidence="1">Phosphoenolpyruvate carboxylase</fullName>
        <shortName evidence="1">PEPC</shortName>
        <shortName evidence="1">PEPCase</shortName>
        <ecNumber evidence="1">4.1.1.31</ecNumber>
    </recommendedName>
</protein>
<proteinExistence type="inferred from homology"/>
<dbReference type="EC" id="4.1.1.31" evidence="1"/>
<dbReference type="EMBL" id="FM178379">
    <property type="protein sequence ID" value="CAQ80438.1"/>
    <property type="molecule type" value="Genomic_DNA"/>
</dbReference>
<dbReference type="RefSeq" id="WP_012551194.1">
    <property type="nucleotide sequence ID" value="NC_011312.1"/>
</dbReference>
<dbReference type="SMR" id="B6EMN4"/>
<dbReference type="KEGG" id="vsa:VSAL_I2754"/>
<dbReference type="eggNOG" id="COG2352">
    <property type="taxonomic scope" value="Bacteria"/>
</dbReference>
<dbReference type="HOGENOM" id="CLU_006557_2_0_6"/>
<dbReference type="Proteomes" id="UP000001730">
    <property type="component" value="Chromosome 1"/>
</dbReference>
<dbReference type="GO" id="GO:0005829">
    <property type="term" value="C:cytosol"/>
    <property type="evidence" value="ECO:0007669"/>
    <property type="project" value="TreeGrafter"/>
</dbReference>
<dbReference type="GO" id="GO:0000287">
    <property type="term" value="F:magnesium ion binding"/>
    <property type="evidence" value="ECO:0007669"/>
    <property type="project" value="UniProtKB-UniRule"/>
</dbReference>
<dbReference type="GO" id="GO:0008964">
    <property type="term" value="F:phosphoenolpyruvate carboxylase activity"/>
    <property type="evidence" value="ECO:0007669"/>
    <property type="project" value="UniProtKB-UniRule"/>
</dbReference>
<dbReference type="GO" id="GO:0015977">
    <property type="term" value="P:carbon fixation"/>
    <property type="evidence" value="ECO:0007669"/>
    <property type="project" value="UniProtKB-UniRule"/>
</dbReference>
<dbReference type="GO" id="GO:0006107">
    <property type="term" value="P:oxaloacetate metabolic process"/>
    <property type="evidence" value="ECO:0007669"/>
    <property type="project" value="UniProtKB-UniRule"/>
</dbReference>
<dbReference type="GO" id="GO:0006099">
    <property type="term" value="P:tricarboxylic acid cycle"/>
    <property type="evidence" value="ECO:0007669"/>
    <property type="project" value="InterPro"/>
</dbReference>
<dbReference type="FunFam" id="1.20.1440.90:FF:000002">
    <property type="entry name" value="Phosphoenolpyruvate carboxylase"/>
    <property type="match status" value="1"/>
</dbReference>
<dbReference type="Gene3D" id="1.20.1440.90">
    <property type="entry name" value="Phosphoenolpyruvate/pyruvate domain"/>
    <property type="match status" value="1"/>
</dbReference>
<dbReference type="HAMAP" id="MF_00595">
    <property type="entry name" value="PEPcase_type1"/>
    <property type="match status" value="1"/>
</dbReference>
<dbReference type="InterPro" id="IPR021135">
    <property type="entry name" value="PEP_COase"/>
</dbReference>
<dbReference type="InterPro" id="IPR022805">
    <property type="entry name" value="PEP_COase_bac/pln-type"/>
</dbReference>
<dbReference type="InterPro" id="IPR018129">
    <property type="entry name" value="PEP_COase_Lys_AS"/>
</dbReference>
<dbReference type="InterPro" id="IPR033129">
    <property type="entry name" value="PEPCASE_His_AS"/>
</dbReference>
<dbReference type="InterPro" id="IPR015813">
    <property type="entry name" value="Pyrv/PenolPyrv_kinase-like_dom"/>
</dbReference>
<dbReference type="NCBIfam" id="NF000584">
    <property type="entry name" value="PRK00009.1"/>
    <property type="match status" value="1"/>
</dbReference>
<dbReference type="PANTHER" id="PTHR30523">
    <property type="entry name" value="PHOSPHOENOLPYRUVATE CARBOXYLASE"/>
    <property type="match status" value="1"/>
</dbReference>
<dbReference type="PANTHER" id="PTHR30523:SF6">
    <property type="entry name" value="PHOSPHOENOLPYRUVATE CARBOXYLASE"/>
    <property type="match status" value="1"/>
</dbReference>
<dbReference type="Pfam" id="PF00311">
    <property type="entry name" value="PEPcase"/>
    <property type="match status" value="1"/>
</dbReference>
<dbReference type="PRINTS" id="PR00150">
    <property type="entry name" value="PEPCARBXLASE"/>
</dbReference>
<dbReference type="SUPFAM" id="SSF51621">
    <property type="entry name" value="Phosphoenolpyruvate/pyruvate domain"/>
    <property type="match status" value="1"/>
</dbReference>
<dbReference type="PROSITE" id="PS00781">
    <property type="entry name" value="PEPCASE_1"/>
    <property type="match status" value="1"/>
</dbReference>
<dbReference type="PROSITE" id="PS00393">
    <property type="entry name" value="PEPCASE_2"/>
    <property type="match status" value="1"/>
</dbReference>
<keyword id="KW-0120">Carbon dioxide fixation</keyword>
<keyword id="KW-0456">Lyase</keyword>
<keyword id="KW-0460">Magnesium</keyword>
<comment type="function">
    <text evidence="1">Forms oxaloacetate, a four-carbon dicarboxylic acid source for the tricarboxylic acid cycle.</text>
</comment>
<comment type="catalytic activity">
    <reaction evidence="1">
        <text>oxaloacetate + phosphate = phosphoenolpyruvate + hydrogencarbonate</text>
        <dbReference type="Rhea" id="RHEA:28370"/>
        <dbReference type="ChEBI" id="CHEBI:16452"/>
        <dbReference type="ChEBI" id="CHEBI:17544"/>
        <dbReference type="ChEBI" id="CHEBI:43474"/>
        <dbReference type="ChEBI" id="CHEBI:58702"/>
        <dbReference type="EC" id="4.1.1.31"/>
    </reaction>
</comment>
<comment type="cofactor">
    <cofactor evidence="1">
        <name>Mg(2+)</name>
        <dbReference type="ChEBI" id="CHEBI:18420"/>
    </cofactor>
</comment>
<comment type="similarity">
    <text evidence="1">Belongs to the PEPCase type 1 family.</text>
</comment>
<gene>
    <name evidence="1" type="primary">ppc</name>
    <name type="ordered locus">VSAL_I2754</name>
</gene>
<name>CAPP_ALISL</name>
<organism>
    <name type="scientific">Aliivibrio salmonicida (strain LFI1238)</name>
    <name type="common">Vibrio salmonicida (strain LFI1238)</name>
    <dbReference type="NCBI Taxonomy" id="316275"/>
    <lineage>
        <taxon>Bacteria</taxon>
        <taxon>Pseudomonadati</taxon>
        <taxon>Pseudomonadota</taxon>
        <taxon>Gammaproteobacteria</taxon>
        <taxon>Vibrionales</taxon>
        <taxon>Vibrionaceae</taxon>
        <taxon>Aliivibrio</taxon>
    </lineage>
</organism>